<proteinExistence type="inferred from homology"/>
<accession>B7J648</accession>
<gene>
    <name evidence="1" type="primary">queF</name>
    <name type="ordered locus">AFE_0752</name>
</gene>
<dbReference type="EC" id="1.7.1.13" evidence="1"/>
<dbReference type="EMBL" id="CP001219">
    <property type="protein sequence ID" value="ACK79812.1"/>
    <property type="molecule type" value="Genomic_DNA"/>
</dbReference>
<dbReference type="RefSeq" id="WP_012536332.1">
    <property type="nucleotide sequence ID" value="NC_011761.1"/>
</dbReference>
<dbReference type="SMR" id="B7J648"/>
<dbReference type="STRING" id="243159.AFE_0752"/>
<dbReference type="PaxDb" id="243159-AFE_0752"/>
<dbReference type="GeneID" id="65280098"/>
<dbReference type="KEGG" id="afr:AFE_0752"/>
<dbReference type="eggNOG" id="COG0780">
    <property type="taxonomic scope" value="Bacteria"/>
</dbReference>
<dbReference type="HOGENOM" id="CLU_102489_1_0_6"/>
<dbReference type="UniPathway" id="UPA00392"/>
<dbReference type="Proteomes" id="UP000001362">
    <property type="component" value="Chromosome"/>
</dbReference>
<dbReference type="GO" id="GO:0005737">
    <property type="term" value="C:cytoplasm"/>
    <property type="evidence" value="ECO:0007669"/>
    <property type="project" value="UniProtKB-SubCell"/>
</dbReference>
<dbReference type="GO" id="GO:0033739">
    <property type="term" value="F:preQ1 synthase activity"/>
    <property type="evidence" value="ECO:0007669"/>
    <property type="project" value="UniProtKB-UniRule"/>
</dbReference>
<dbReference type="GO" id="GO:0008616">
    <property type="term" value="P:queuosine biosynthetic process"/>
    <property type="evidence" value="ECO:0007669"/>
    <property type="project" value="UniProtKB-UniRule"/>
</dbReference>
<dbReference type="GO" id="GO:0006400">
    <property type="term" value="P:tRNA modification"/>
    <property type="evidence" value="ECO:0007669"/>
    <property type="project" value="UniProtKB-UniRule"/>
</dbReference>
<dbReference type="Gene3D" id="3.30.1130.10">
    <property type="match status" value="1"/>
</dbReference>
<dbReference type="HAMAP" id="MF_00818">
    <property type="entry name" value="QueF_type1"/>
    <property type="match status" value="1"/>
</dbReference>
<dbReference type="InterPro" id="IPR043133">
    <property type="entry name" value="GTP-CH-I_C/QueF"/>
</dbReference>
<dbReference type="InterPro" id="IPR050084">
    <property type="entry name" value="NADPH_dep_7-cyano-7-deazaG_red"/>
</dbReference>
<dbReference type="InterPro" id="IPR029500">
    <property type="entry name" value="QueF"/>
</dbReference>
<dbReference type="InterPro" id="IPR016856">
    <property type="entry name" value="QueF_type1"/>
</dbReference>
<dbReference type="NCBIfam" id="TIGR03139">
    <property type="entry name" value="QueF-II"/>
    <property type="match status" value="1"/>
</dbReference>
<dbReference type="PANTHER" id="PTHR34354">
    <property type="entry name" value="NADPH-DEPENDENT 7-CYANO-7-DEAZAGUANINE REDUCTASE"/>
    <property type="match status" value="1"/>
</dbReference>
<dbReference type="PANTHER" id="PTHR34354:SF1">
    <property type="entry name" value="NADPH-DEPENDENT 7-CYANO-7-DEAZAGUANINE REDUCTASE"/>
    <property type="match status" value="1"/>
</dbReference>
<dbReference type="Pfam" id="PF14489">
    <property type="entry name" value="QueF"/>
    <property type="match status" value="1"/>
</dbReference>
<dbReference type="PIRSF" id="PIRSF027377">
    <property type="entry name" value="Nitrile_oxidored_QueF"/>
    <property type="match status" value="1"/>
</dbReference>
<dbReference type="SUPFAM" id="SSF55620">
    <property type="entry name" value="Tetrahydrobiopterin biosynthesis enzymes-like"/>
    <property type="match status" value="1"/>
</dbReference>
<feature type="chain" id="PRO_1000134288" description="NADPH-dependent 7-cyano-7-deazaguanine reductase">
    <location>
        <begin position="1"/>
        <end position="141"/>
    </location>
</feature>
<feature type="active site" description="Thioimide intermediate" evidence="1">
    <location>
        <position position="34"/>
    </location>
</feature>
<feature type="active site" description="Proton donor" evidence="1">
    <location>
        <position position="41"/>
    </location>
</feature>
<feature type="binding site" evidence="1">
    <location>
        <begin position="56"/>
        <end position="58"/>
    </location>
    <ligand>
        <name>substrate</name>
    </ligand>
</feature>
<feature type="binding site" evidence="1">
    <location>
        <begin position="75"/>
        <end position="76"/>
    </location>
    <ligand>
        <name>substrate</name>
    </ligand>
</feature>
<name>QUEF_ACIF2</name>
<keyword id="KW-0963">Cytoplasm</keyword>
<keyword id="KW-0521">NADP</keyword>
<keyword id="KW-0560">Oxidoreductase</keyword>
<keyword id="KW-0671">Queuosine biosynthesis</keyword>
<keyword id="KW-1185">Reference proteome</keyword>
<comment type="function">
    <text evidence="1">Catalyzes the NADPH-dependent reduction of 7-cyano-7-deazaguanine (preQ0) to 7-aminomethyl-7-deazaguanine (preQ1).</text>
</comment>
<comment type="catalytic activity">
    <reaction evidence="1">
        <text>7-aminomethyl-7-carbaguanine + 2 NADP(+) = 7-cyano-7-deazaguanine + 2 NADPH + 3 H(+)</text>
        <dbReference type="Rhea" id="RHEA:13409"/>
        <dbReference type="ChEBI" id="CHEBI:15378"/>
        <dbReference type="ChEBI" id="CHEBI:45075"/>
        <dbReference type="ChEBI" id="CHEBI:57783"/>
        <dbReference type="ChEBI" id="CHEBI:58349"/>
        <dbReference type="ChEBI" id="CHEBI:58703"/>
        <dbReference type="EC" id="1.7.1.13"/>
    </reaction>
</comment>
<comment type="pathway">
    <text evidence="1">tRNA modification; tRNA-queuosine biosynthesis.</text>
</comment>
<comment type="subcellular location">
    <subcellularLocation>
        <location evidence="1">Cytoplasm</location>
    </subcellularLocation>
</comment>
<comment type="similarity">
    <text evidence="1">Belongs to the GTP cyclohydrolase I family. QueF type 1 subfamily.</text>
</comment>
<evidence type="ECO:0000255" key="1">
    <source>
        <dbReference type="HAMAP-Rule" id="MF_00818"/>
    </source>
</evidence>
<sequence length="141" mass="16512">MPSQPSRELERFSNPHPERDYVVHMDLPEFTCLCPLTGQPDFAHFMLDFIPDQHNVELKSLKLYLWSFRDEGAFHEAMTNRIADDLIGLINPRYLRLLGRWYVRGGITTDVLIEHRQPGWQNPDILGQLPTVRWAQHQPGH</sequence>
<reference key="1">
    <citation type="journal article" date="2008" name="BMC Genomics">
        <title>Acidithiobacillus ferrooxidans metabolism: from genome sequence to industrial applications.</title>
        <authorList>
            <person name="Valdes J."/>
            <person name="Pedroso I."/>
            <person name="Quatrini R."/>
            <person name="Dodson R.J."/>
            <person name="Tettelin H."/>
            <person name="Blake R. II"/>
            <person name="Eisen J.A."/>
            <person name="Holmes D.S."/>
        </authorList>
    </citation>
    <scope>NUCLEOTIDE SEQUENCE [LARGE SCALE GENOMIC DNA]</scope>
    <source>
        <strain>ATCC 23270 / DSM 14882 / CIP 104768 / NCIMB 8455</strain>
    </source>
</reference>
<protein>
    <recommendedName>
        <fullName evidence="1">NADPH-dependent 7-cyano-7-deazaguanine reductase</fullName>
        <ecNumber evidence="1">1.7.1.13</ecNumber>
    </recommendedName>
    <alternativeName>
        <fullName evidence="1">7-cyano-7-carbaguanine reductase</fullName>
    </alternativeName>
    <alternativeName>
        <fullName evidence="1">NADPH-dependent nitrile oxidoreductase</fullName>
    </alternativeName>
    <alternativeName>
        <fullName evidence="1">PreQ(0) reductase</fullName>
    </alternativeName>
</protein>
<organism>
    <name type="scientific">Acidithiobacillus ferrooxidans (strain ATCC 23270 / DSM 14882 / CIP 104768 / NCIMB 8455)</name>
    <name type="common">Ferrobacillus ferrooxidans (strain ATCC 23270)</name>
    <dbReference type="NCBI Taxonomy" id="243159"/>
    <lineage>
        <taxon>Bacteria</taxon>
        <taxon>Pseudomonadati</taxon>
        <taxon>Pseudomonadota</taxon>
        <taxon>Acidithiobacillia</taxon>
        <taxon>Acidithiobacillales</taxon>
        <taxon>Acidithiobacillaceae</taxon>
        <taxon>Acidithiobacillus</taxon>
    </lineage>
</organism>